<comment type="subunit">
    <text evidence="1">Part of the 30S ribosomal subunit.</text>
</comment>
<comment type="subcellular location">
    <subcellularLocation>
        <location>Plastid</location>
        <location>Chloroplast</location>
    </subcellularLocation>
</comment>
<comment type="similarity">
    <text evidence="2">Belongs to the universal ribosomal protein uS15 family.</text>
</comment>
<dbReference type="EMBL" id="EF115541">
    <property type="protein sequence ID" value="ABK79458.1"/>
    <property type="molecule type" value="Genomic_DNA"/>
</dbReference>
<dbReference type="EMBL" id="EF115541">
    <property type="protein sequence ID" value="ABK79469.1"/>
    <property type="molecule type" value="Genomic_DNA"/>
</dbReference>
<dbReference type="SMR" id="A1E9N6"/>
<dbReference type="GO" id="GO:0009507">
    <property type="term" value="C:chloroplast"/>
    <property type="evidence" value="ECO:0007669"/>
    <property type="project" value="UniProtKB-SubCell"/>
</dbReference>
<dbReference type="GO" id="GO:1990904">
    <property type="term" value="C:ribonucleoprotein complex"/>
    <property type="evidence" value="ECO:0007669"/>
    <property type="project" value="UniProtKB-KW"/>
</dbReference>
<dbReference type="GO" id="GO:0005840">
    <property type="term" value="C:ribosome"/>
    <property type="evidence" value="ECO:0007669"/>
    <property type="project" value="UniProtKB-KW"/>
</dbReference>
<dbReference type="GO" id="GO:0003735">
    <property type="term" value="F:structural constituent of ribosome"/>
    <property type="evidence" value="ECO:0007669"/>
    <property type="project" value="InterPro"/>
</dbReference>
<dbReference type="GO" id="GO:0006412">
    <property type="term" value="P:translation"/>
    <property type="evidence" value="ECO:0007669"/>
    <property type="project" value="UniProtKB-UniRule"/>
</dbReference>
<dbReference type="Gene3D" id="1.10.287.10">
    <property type="entry name" value="S15/NS1, RNA-binding"/>
    <property type="match status" value="1"/>
</dbReference>
<dbReference type="HAMAP" id="MF_01343_B">
    <property type="entry name" value="Ribosomal_uS15_B"/>
    <property type="match status" value="1"/>
</dbReference>
<dbReference type="InterPro" id="IPR000589">
    <property type="entry name" value="Ribosomal_uS15"/>
</dbReference>
<dbReference type="InterPro" id="IPR005290">
    <property type="entry name" value="Ribosomal_uS15_bac-type"/>
</dbReference>
<dbReference type="InterPro" id="IPR009068">
    <property type="entry name" value="uS15_NS1_RNA-bd_sf"/>
</dbReference>
<dbReference type="NCBIfam" id="TIGR00952">
    <property type="entry name" value="S15_bact"/>
    <property type="match status" value="1"/>
</dbReference>
<dbReference type="PANTHER" id="PTHR23321">
    <property type="entry name" value="RIBOSOMAL PROTEIN S15, BACTERIAL AND ORGANELLAR"/>
    <property type="match status" value="1"/>
</dbReference>
<dbReference type="PANTHER" id="PTHR23321:SF26">
    <property type="entry name" value="SMALL RIBOSOMAL SUBUNIT PROTEIN US15M"/>
    <property type="match status" value="1"/>
</dbReference>
<dbReference type="Pfam" id="PF00312">
    <property type="entry name" value="Ribosomal_S15"/>
    <property type="match status" value="1"/>
</dbReference>
<dbReference type="SMART" id="SM01387">
    <property type="entry name" value="Ribosomal_S15"/>
    <property type="match status" value="1"/>
</dbReference>
<dbReference type="SUPFAM" id="SSF47060">
    <property type="entry name" value="S15/NS1 RNA-binding domain"/>
    <property type="match status" value="1"/>
</dbReference>
<dbReference type="PROSITE" id="PS00362">
    <property type="entry name" value="RIBOSOMAL_S15"/>
    <property type="match status" value="1"/>
</dbReference>
<geneLocation type="chloroplast"/>
<proteinExistence type="inferred from homology"/>
<gene>
    <name type="primary">rps15-A</name>
</gene>
<gene>
    <name type="primary">rps15-B</name>
</gene>
<evidence type="ECO:0000250" key="1"/>
<evidence type="ECO:0000305" key="2"/>
<keyword id="KW-0150">Chloroplast</keyword>
<keyword id="KW-0934">Plastid</keyword>
<keyword id="KW-0687">Ribonucleoprotein</keyword>
<keyword id="KW-0689">Ribosomal protein</keyword>
<accession>A1E9N6</accession>
<sequence>MKKKGGRKILGFMVKEEKEENRGSVEFQVFSFTNKIRRLASHLELHKKDFSSERGLRRLLGKRRRLLAYLAKKNRVRYKKLIGQLNIREQ</sequence>
<name>RR15_HORVU</name>
<protein>
    <recommendedName>
        <fullName evidence="2">Small ribosomal subunit protein uS15c</fullName>
    </recommendedName>
    <alternativeName>
        <fullName>30S ribosomal protein S15, chloroplastic</fullName>
    </alternativeName>
</protein>
<reference key="1">
    <citation type="journal article" date="2007" name="Theor. Appl. Genet.">
        <title>Complete chloroplast genome sequences of Hordeum vulgare, Sorghum bicolor and Agrostis stolonifera, and comparative analyses with other grass genomes.</title>
        <authorList>
            <person name="Saski C."/>
            <person name="Lee S.-B."/>
            <person name="Fjellheim S."/>
            <person name="Guda C."/>
            <person name="Jansen R.K."/>
            <person name="Luo H."/>
            <person name="Tomkins J."/>
            <person name="Rognli O.A."/>
            <person name="Daniell H."/>
            <person name="Clarke J.L."/>
        </authorList>
    </citation>
    <scope>NUCLEOTIDE SEQUENCE [LARGE SCALE GENOMIC DNA]</scope>
    <source>
        <strain>cv. Morex</strain>
    </source>
</reference>
<feature type="chain" id="PRO_0000354259" description="Small ribosomal subunit protein uS15c">
    <location>
        <begin position="1"/>
        <end position="90"/>
    </location>
</feature>
<organism>
    <name type="scientific">Hordeum vulgare</name>
    <name type="common">Barley</name>
    <dbReference type="NCBI Taxonomy" id="4513"/>
    <lineage>
        <taxon>Eukaryota</taxon>
        <taxon>Viridiplantae</taxon>
        <taxon>Streptophyta</taxon>
        <taxon>Embryophyta</taxon>
        <taxon>Tracheophyta</taxon>
        <taxon>Spermatophyta</taxon>
        <taxon>Magnoliopsida</taxon>
        <taxon>Liliopsida</taxon>
        <taxon>Poales</taxon>
        <taxon>Poaceae</taxon>
        <taxon>BOP clade</taxon>
        <taxon>Pooideae</taxon>
        <taxon>Triticodae</taxon>
        <taxon>Triticeae</taxon>
        <taxon>Hordeinae</taxon>
        <taxon>Hordeum</taxon>
    </lineage>
</organism>